<comment type="function">
    <text evidence="1">Involved in chemotaxis. Part of a chemotaxis signal transduction system that modulates chemotaxis in response to various stimuli. Catalyzes the demethylation of specific methylglutamate residues introduced into the chemoreceptors (methyl-accepting chemotaxis proteins or MCP) by CheR. Also mediates the irreversible deamidation of specific glutamine residues to glutamic acid.</text>
</comment>
<comment type="catalytic activity">
    <reaction evidence="1">
        <text>[protein]-L-glutamate 5-O-methyl ester + H2O = L-glutamyl-[protein] + methanol + H(+)</text>
        <dbReference type="Rhea" id="RHEA:23236"/>
        <dbReference type="Rhea" id="RHEA-COMP:10208"/>
        <dbReference type="Rhea" id="RHEA-COMP:10311"/>
        <dbReference type="ChEBI" id="CHEBI:15377"/>
        <dbReference type="ChEBI" id="CHEBI:15378"/>
        <dbReference type="ChEBI" id="CHEBI:17790"/>
        <dbReference type="ChEBI" id="CHEBI:29973"/>
        <dbReference type="ChEBI" id="CHEBI:82795"/>
        <dbReference type="EC" id="3.1.1.61"/>
    </reaction>
</comment>
<comment type="catalytic activity">
    <reaction evidence="1">
        <text>L-glutaminyl-[protein] + H2O = L-glutamyl-[protein] + NH4(+)</text>
        <dbReference type="Rhea" id="RHEA:16441"/>
        <dbReference type="Rhea" id="RHEA-COMP:10207"/>
        <dbReference type="Rhea" id="RHEA-COMP:10208"/>
        <dbReference type="ChEBI" id="CHEBI:15377"/>
        <dbReference type="ChEBI" id="CHEBI:28938"/>
        <dbReference type="ChEBI" id="CHEBI:29973"/>
        <dbReference type="ChEBI" id="CHEBI:30011"/>
        <dbReference type="EC" id="3.5.1.44"/>
    </reaction>
</comment>
<comment type="subcellular location">
    <subcellularLocation>
        <location evidence="1">Cytoplasm</location>
    </subcellularLocation>
</comment>
<comment type="domain">
    <text evidence="1">Contains a C-terminal catalytic domain, and an N-terminal region which modulates catalytic activity.</text>
</comment>
<comment type="PTM">
    <text evidence="1">Phosphorylated by CheA. Phosphorylation of the N-terminal regulatory domain activates the methylesterase activity.</text>
</comment>
<comment type="similarity">
    <text evidence="1">Belongs to the CheB family.</text>
</comment>
<accession>Q1BLQ3</accession>
<keyword id="KW-0145">Chemotaxis</keyword>
<keyword id="KW-0963">Cytoplasm</keyword>
<keyword id="KW-0378">Hydrolase</keyword>
<keyword id="KW-0597">Phosphoprotein</keyword>
<name>CHEB3_BURO1</name>
<protein>
    <recommendedName>
        <fullName evidence="1">Protein-glutamate methylesterase/protein-glutamine glutaminase 3</fullName>
        <ecNumber evidence="1">3.1.1.61</ecNumber>
        <ecNumber evidence="1">3.5.1.44</ecNumber>
    </recommendedName>
</protein>
<feature type="chain" id="PRO_0000264266" description="Protein-glutamate methylesterase/protein-glutamine glutaminase 3">
    <location>
        <begin position="1"/>
        <end position="339"/>
    </location>
</feature>
<feature type="domain" description="Response regulatory" evidence="1">
    <location>
        <begin position="2"/>
        <end position="119"/>
    </location>
</feature>
<feature type="domain" description="CheB-type methylesterase" evidence="1">
    <location>
        <begin position="141"/>
        <end position="336"/>
    </location>
</feature>
<feature type="active site" evidence="1">
    <location>
        <position position="158"/>
    </location>
</feature>
<feature type="active site" evidence="1">
    <location>
        <position position="185"/>
    </location>
</feature>
<feature type="active site" evidence="1">
    <location>
        <position position="278"/>
    </location>
</feature>
<feature type="modified residue" description="4-aspartylphosphate" evidence="1">
    <location>
        <position position="53"/>
    </location>
</feature>
<reference key="1">
    <citation type="submission" date="2006-05" db="EMBL/GenBank/DDBJ databases">
        <title>Complete sequence of chromosome 2 of Burkholderia cenocepacia AU 1054.</title>
        <authorList>
            <consortium name="US DOE Joint Genome Institute"/>
            <person name="Copeland A."/>
            <person name="Lucas S."/>
            <person name="Lapidus A."/>
            <person name="Barry K."/>
            <person name="Detter J.C."/>
            <person name="Glavina del Rio T."/>
            <person name="Hammon N."/>
            <person name="Israni S."/>
            <person name="Dalin E."/>
            <person name="Tice H."/>
            <person name="Pitluck S."/>
            <person name="Chain P."/>
            <person name="Malfatti S."/>
            <person name="Shin M."/>
            <person name="Vergez L."/>
            <person name="Schmutz J."/>
            <person name="Larimer F."/>
            <person name="Land M."/>
            <person name="Hauser L."/>
            <person name="Kyrpides N."/>
            <person name="Lykidis A."/>
            <person name="LiPuma J.J."/>
            <person name="Konstantinidis K."/>
            <person name="Tiedje J.M."/>
            <person name="Richardson P."/>
        </authorList>
    </citation>
    <scope>NUCLEOTIDE SEQUENCE [LARGE SCALE GENOMIC DNA]</scope>
    <source>
        <strain>AU 1054</strain>
    </source>
</reference>
<evidence type="ECO:0000255" key="1">
    <source>
        <dbReference type="HAMAP-Rule" id="MF_00099"/>
    </source>
</evidence>
<gene>
    <name evidence="1" type="primary">cheB3</name>
    <name type="ordered locus">Bcen_4571</name>
</gene>
<sequence>MNIGIVNDLPLAVEALRRVIALRADHRVLWVATDGDEAVDFCVAHPPDVVLMDLVMPKVDGVAATRRIMARAPCAILIVTASVSANTSSVYEAMGAGALDAVDTPTLALGLSTDASPQALLAKIDQIGRLLESRTTALVPPGPAPTRGQPTLVAIGASAGGPTALTALLRALPADFPAAIVIVQHVDQAFAYGMAEWLDGYTRLPVRVARQGSVPEAGAVLLAATNDHLMLSPRGVLGYTRHPAETPYRPSIDVFFNSVADGWQGDALGVLLTGMGRDGALGLKAMRAKGCYTIAQDQATSAVYGMPKAAAAIGAASAILPLDQIAPQLIARIALTSRD</sequence>
<proteinExistence type="inferred from homology"/>
<organism>
    <name type="scientific">Burkholderia orbicola (strain AU 1054)</name>
    <dbReference type="NCBI Taxonomy" id="331271"/>
    <lineage>
        <taxon>Bacteria</taxon>
        <taxon>Pseudomonadati</taxon>
        <taxon>Pseudomonadota</taxon>
        <taxon>Betaproteobacteria</taxon>
        <taxon>Burkholderiales</taxon>
        <taxon>Burkholderiaceae</taxon>
        <taxon>Burkholderia</taxon>
        <taxon>Burkholderia cepacia complex</taxon>
        <taxon>Burkholderia orbicola</taxon>
    </lineage>
</organism>
<dbReference type="EC" id="3.1.1.61" evidence="1"/>
<dbReference type="EC" id="3.5.1.44" evidence="1"/>
<dbReference type="EMBL" id="CP000379">
    <property type="protein sequence ID" value="ABF79452.1"/>
    <property type="molecule type" value="Genomic_DNA"/>
</dbReference>
<dbReference type="SMR" id="Q1BLQ3"/>
<dbReference type="HOGENOM" id="CLU_000445_51_0_4"/>
<dbReference type="GO" id="GO:0005737">
    <property type="term" value="C:cytoplasm"/>
    <property type="evidence" value="ECO:0007669"/>
    <property type="project" value="UniProtKB-SubCell"/>
</dbReference>
<dbReference type="GO" id="GO:0000156">
    <property type="term" value="F:phosphorelay response regulator activity"/>
    <property type="evidence" value="ECO:0007669"/>
    <property type="project" value="InterPro"/>
</dbReference>
<dbReference type="GO" id="GO:0008984">
    <property type="term" value="F:protein-glutamate methylesterase activity"/>
    <property type="evidence" value="ECO:0007669"/>
    <property type="project" value="UniProtKB-UniRule"/>
</dbReference>
<dbReference type="GO" id="GO:0050568">
    <property type="term" value="F:protein-glutamine glutaminase activity"/>
    <property type="evidence" value="ECO:0007669"/>
    <property type="project" value="UniProtKB-UniRule"/>
</dbReference>
<dbReference type="GO" id="GO:0006935">
    <property type="term" value="P:chemotaxis"/>
    <property type="evidence" value="ECO:0007669"/>
    <property type="project" value="UniProtKB-UniRule"/>
</dbReference>
<dbReference type="CDD" id="cd16432">
    <property type="entry name" value="CheB_Rec"/>
    <property type="match status" value="1"/>
</dbReference>
<dbReference type="CDD" id="cd17541">
    <property type="entry name" value="REC_CheB-like"/>
    <property type="match status" value="1"/>
</dbReference>
<dbReference type="Gene3D" id="3.40.50.2300">
    <property type="match status" value="1"/>
</dbReference>
<dbReference type="Gene3D" id="3.40.50.180">
    <property type="entry name" value="Methylesterase CheB, C-terminal domain"/>
    <property type="match status" value="1"/>
</dbReference>
<dbReference type="HAMAP" id="MF_00099">
    <property type="entry name" value="CheB_chemtxs"/>
    <property type="match status" value="1"/>
</dbReference>
<dbReference type="InterPro" id="IPR008248">
    <property type="entry name" value="CheB-like"/>
</dbReference>
<dbReference type="InterPro" id="IPR035909">
    <property type="entry name" value="CheB_C"/>
</dbReference>
<dbReference type="InterPro" id="IPR011006">
    <property type="entry name" value="CheY-like_superfamily"/>
</dbReference>
<dbReference type="InterPro" id="IPR000673">
    <property type="entry name" value="Sig_transdc_resp-reg_Me-estase"/>
</dbReference>
<dbReference type="InterPro" id="IPR001789">
    <property type="entry name" value="Sig_transdc_resp-reg_receiver"/>
</dbReference>
<dbReference type="NCBIfam" id="NF009206">
    <property type="entry name" value="PRK12555.1"/>
    <property type="match status" value="1"/>
</dbReference>
<dbReference type="PANTHER" id="PTHR42872">
    <property type="entry name" value="PROTEIN-GLUTAMATE METHYLESTERASE/PROTEIN-GLUTAMINE GLUTAMINASE"/>
    <property type="match status" value="1"/>
</dbReference>
<dbReference type="PANTHER" id="PTHR42872:SF6">
    <property type="entry name" value="PROTEIN-GLUTAMATE METHYLESTERASE_PROTEIN-GLUTAMINE GLUTAMINASE"/>
    <property type="match status" value="1"/>
</dbReference>
<dbReference type="Pfam" id="PF01339">
    <property type="entry name" value="CheB_methylest"/>
    <property type="match status" value="1"/>
</dbReference>
<dbReference type="Pfam" id="PF00072">
    <property type="entry name" value="Response_reg"/>
    <property type="match status" value="1"/>
</dbReference>
<dbReference type="PIRSF" id="PIRSF000876">
    <property type="entry name" value="RR_chemtxs_CheB"/>
    <property type="match status" value="1"/>
</dbReference>
<dbReference type="SMART" id="SM00448">
    <property type="entry name" value="REC"/>
    <property type="match status" value="1"/>
</dbReference>
<dbReference type="SUPFAM" id="SSF52172">
    <property type="entry name" value="CheY-like"/>
    <property type="match status" value="1"/>
</dbReference>
<dbReference type="SUPFAM" id="SSF52738">
    <property type="entry name" value="Methylesterase CheB, C-terminal domain"/>
    <property type="match status" value="1"/>
</dbReference>
<dbReference type="PROSITE" id="PS50122">
    <property type="entry name" value="CHEB"/>
    <property type="match status" value="1"/>
</dbReference>
<dbReference type="PROSITE" id="PS50110">
    <property type="entry name" value="RESPONSE_REGULATORY"/>
    <property type="match status" value="1"/>
</dbReference>